<sequence length="177" mass="19158">MCTSRQIIGSLLVLSVLEIGLGLSSVAVGAVTFFRVRMEQKPQLGDSSPVWSGACFLICGVCGIFCAKKKSGLIMILFSACCICGLIGGILNIQFLRALNKRSSSLYSLYLASMSLACIGISGCTISTWLTCRLASYEQRRMFLEREHSLHHSHEMTEKDTENITNGGGPLALNGRV</sequence>
<evidence type="ECO:0000250" key="1">
    <source>
        <dbReference type="UniProtKB" id="Q5HYL7"/>
    </source>
</evidence>
<evidence type="ECO:0000255" key="2"/>
<evidence type="ECO:0000256" key="3">
    <source>
        <dbReference type="SAM" id="MobiDB-lite"/>
    </source>
</evidence>
<keyword id="KW-0963">Cytoplasm</keyword>
<keyword id="KW-0472">Membrane</keyword>
<keyword id="KW-1185">Reference proteome</keyword>
<keyword id="KW-0812">Transmembrane</keyword>
<keyword id="KW-1133">Transmembrane helix</keyword>
<name>TM196_XENTR</name>
<feature type="chain" id="PRO_0000317259" description="Transmembrane protein 196">
    <location>
        <begin position="1"/>
        <end position="177"/>
    </location>
</feature>
<feature type="transmembrane region" description="Helical" evidence="2">
    <location>
        <begin position="11"/>
        <end position="31"/>
    </location>
</feature>
<feature type="transmembrane region" description="Helical" evidence="2">
    <location>
        <begin position="47"/>
        <end position="67"/>
    </location>
</feature>
<feature type="transmembrane region" description="Helical" evidence="2">
    <location>
        <begin position="73"/>
        <end position="93"/>
    </location>
</feature>
<feature type="transmembrane region" description="Helical" evidence="2">
    <location>
        <begin position="106"/>
        <end position="126"/>
    </location>
</feature>
<feature type="region of interest" description="Disordered" evidence="3">
    <location>
        <begin position="152"/>
        <end position="177"/>
    </location>
</feature>
<feature type="compositionally biased region" description="Basic and acidic residues" evidence="3">
    <location>
        <begin position="152"/>
        <end position="162"/>
    </location>
</feature>
<reference key="1">
    <citation type="submission" date="2007-03" db="EMBL/GenBank/DDBJ databases">
        <authorList>
            <consortium name="NIH - Xenopus Gene Collection (XGC) project"/>
        </authorList>
    </citation>
    <scope>NUCLEOTIDE SEQUENCE [LARGE SCALE MRNA]</scope>
    <source>
        <tissue>Brain</tissue>
    </source>
</reference>
<gene>
    <name type="primary">tmem196</name>
</gene>
<organism>
    <name type="scientific">Xenopus tropicalis</name>
    <name type="common">Western clawed frog</name>
    <name type="synonym">Silurana tropicalis</name>
    <dbReference type="NCBI Taxonomy" id="8364"/>
    <lineage>
        <taxon>Eukaryota</taxon>
        <taxon>Metazoa</taxon>
        <taxon>Chordata</taxon>
        <taxon>Craniata</taxon>
        <taxon>Vertebrata</taxon>
        <taxon>Euteleostomi</taxon>
        <taxon>Amphibia</taxon>
        <taxon>Batrachia</taxon>
        <taxon>Anura</taxon>
        <taxon>Pipoidea</taxon>
        <taxon>Pipidae</taxon>
        <taxon>Xenopodinae</taxon>
        <taxon>Xenopus</taxon>
        <taxon>Silurana</taxon>
    </lineage>
</organism>
<accession>A4IIU3</accession>
<comment type="subcellular location">
    <subcellularLocation>
        <location evidence="1">Cytoplasm</location>
    </subcellularLocation>
    <subcellularLocation>
        <location evidence="2">Membrane</location>
        <topology evidence="2">Multi-pass membrane protein</topology>
    </subcellularLocation>
</comment>
<proteinExistence type="evidence at transcript level"/>
<protein>
    <recommendedName>
        <fullName>Transmembrane protein 196</fullName>
    </recommendedName>
</protein>
<dbReference type="EMBL" id="BC136156">
    <property type="protein sequence ID" value="AAI36157.1"/>
    <property type="molecule type" value="mRNA"/>
</dbReference>
<dbReference type="RefSeq" id="NP_001096449.1">
    <property type="nucleotide sequence ID" value="NM_001102979.1"/>
</dbReference>
<dbReference type="SMR" id="A4IIU3"/>
<dbReference type="FunCoup" id="A4IIU3">
    <property type="interactions" value="17"/>
</dbReference>
<dbReference type="STRING" id="8364.ENSXETP00000046264"/>
<dbReference type="PaxDb" id="8364-ENSXETP00000062463"/>
<dbReference type="DNASU" id="100125062"/>
<dbReference type="GeneID" id="100125062"/>
<dbReference type="KEGG" id="xtr:100125062"/>
<dbReference type="AGR" id="Xenbase:XB-GENE-950737"/>
<dbReference type="CTD" id="256130"/>
<dbReference type="Xenbase" id="XB-GENE-950737">
    <property type="gene designation" value="tmem196"/>
</dbReference>
<dbReference type="eggNOG" id="ENOG502RXKV">
    <property type="taxonomic scope" value="Eukaryota"/>
</dbReference>
<dbReference type="HOGENOM" id="CLU_129608_0_0_1"/>
<dbReference type="InParanoid" id="A4IIU3"/>
<dbReference type="OMA" id="MLCARKR"/>
<dbReference type="OrthoDB" id="10016951at2759"/>
<dbReference type="PhylomeDB" id="A4IIU3"/>
<dbReference type="TreeFam" id="TF332520"/>
<dbReference type="Proteomes" id="UP000008143">
    <property type="component" value="Chromosome 6"/>
</dbReference>
<dbReference type="GO" id="GO:0005737">
    <property type="term" value="C:cytoplasm"/>
    <property type="evidence" value="ECO:0000250"/>
    <property type="project" value="UniProtKB"/>
</dbReference>
<dbReference type="GO" id="GO:0016020">
    <property type="term" value="C:membrane"/>
    <property type="evidence" value="ECO:0007669"/>
    <property type="project" value="UniProtKB-SubCell"/>
</dbReference>
<dbReference type="InterPro" id="IPR037661">
    <property type="entry name" value="TMEM196"/>
</dbReference>
<dbReference type="PANTHER" id="PTHR28681">
    <property type="entry name" value="TRANSMEMBRANE PROTEIN 196"/>
    <property type="match status" value="1"/>
</dbReference>
<dbReference type="PANTHER" id="PTHR28681:SF1">
    <property type="entry name" value="TRANSMEMBRANE PROTEIN 196"/>
    <property type="match status" value="1"/>
</dbReference>